<dbReference type="EC" id="5.3.1.6" evidence="1"/>
<dbReference type="EMBL" id="FM242711">
    <property type="protein sequence ID" value="CAS04761.1"/>
    <property type="molecule type" value="Genomic_DNA"/>
</dbReference>
<dbReference type="RefSeq" id="WP_012681204.1">
    <property type="nucleotide sequence ID" value="NC_012488.1"/>
</dbReference>
<dbReference type="SMR" id="C1L1P6"/>
<dbReference type="KEGG" id="lmc:Lm4b_00995"/>
<dbReference type="HOGENOM" id="CLU_056590_1_0_9"/>
<dbReference type="UniPathway" id="UPA00115">
    <property type="reaction ID" value="UER00412"/>
</dbReference>
<dbReference type="GO" id="GO:0004751">
    <property type="term" value="F:ribose-5-phosphate isomerase activity"/>
    <property type="evidence" value="ECO:0007669"/>
    <property type="project" value="UniProtKB-UniRule"/>
</dbReference>
<dbReference type="GO" id="GO:0009052">
    <property type="term" value="P:pentose-phosphate shunt, non-oxidative branch"/>
    <property type="evidence" value="ECO:0007669"/>
    <property type="project" value="UniProtKB-UniRule"/>
</dbReference>
<dbReference type="CDD" id="cd01398">
    <property type="entry name" value="RPI_A"/>
    <property type="match status" value="1"/>
</dbReference>
<dbReference type="FunFam" id="3.40.50.1360:FF:000001">
    <property type="entry name" value="Ribose-5-phosphate isomerase A"/>
    <property type="match status" value="1"/>
</dbReference>
<dbReference type="Gene3D" id="3.30.70.260">
    <property type="match status" value="1"/>
</dbReference>
<dbReference type="Gene3D" id="3.40.50.1360">
    <property type="match status" value="1"/>
</dbReference>
<dbReference type="HAMAP" id="MF_00170">
    <property type="entry name" value="Rib_5P_isom_A"/>
    <property type="match status" value="1"/>
</dbReference>
<dbReference type="InterPro" id="IPR037171">
    <property type="entry name" value="NagB/RpiA_transferase-like"/>
</dbReference>
<dbReference type="InterPro" id="IPR050262">
    <property type="entry name" value="Ribose-5P_isomerase"/>
</dbReference>
<dbReference type="InterPro" id="IPR020672">
    <property type="entry name" value="Ribose5P_isomerase_typA_subgr"/>
</dbReference>
<dbReference type="InterPro" id="IPR004788">
    <property type="entry name" value="Ribose5P_isomerase_type_A"/>
</dbReference>
<dbReference type="NCBIfam" id="NF001924">
    <property type="entry name" value="PRK00702.1"/>
    <property type="match status" value="1"/>
</dbReference>
<dbReference type="NCBIfam" id="TIGR00021">
    <property type="entry name" value="rpiA"/>
    <property type="match status" value="1"/>
</dbReference>
<dbReference type="PANTHER" id="PTHR43748">
    <property type="entry name" value="RIBOSE-5-PHOSPHATE ISOMERASE 3, CHLOROPLASTIC-RELATED"/>
    <property type="match status" value="1"/>
</dbReference>
<dbReference type="PANTHER" id="PTHR43748:SF3">
    <property type="entry name" value="RIBOSE-5-PHOSPHATE ISOMERASE 3, CHLOROPLASTIC-RELATED"/>
    <property type="match status" value="1"/>
</dbReference>
<dbReference type="Pfam" id="PF06026">
    <property type="entry name" value="Rib_5-P_isom_A"/>
    <property type="match status" value="1"/>
</dbReference>
<dbReference type="SUPFAM" id="SSF75445">
    <property type="entry name" value="D-ribose-5-phosphate isomerase (RpiA), lid domain"/>
    <property type="match status" value="1"/>
</dbReference>
<dbReference type="SUPFAM" id="SSF100950">
    <property type="entry name" value="NagB/RpiA/CoA transferase-like"/>
    <property type="match status" value="1"/>
</dbReference>
<protein>
    <recommendedName>
        <fullName evidence="1">Ribose-5-phosphate isomerase A</fullName>
        <ecNumber evidence="1">5.3.1.6</ecNumber>
    </recommendedName>
    <alternativeName>
        <fullName evidence="1">Phosphoriboisomerase A</fullName>
        <shortName evidence="1">PRI</shortName>
    </alternativeName>
</protein>
<name>RPIA_LISMC</name>
<organism>
    <name type="scientific">Listeria monocytogenes serotype 4b (strain CLIP80459)</name>
    <dbReference type="NCBI Taxonomy" id="568819"/>
    <lineage>
        <taxon>Bacteria</taxon>
        <taxon>Bacillati</taxon>
        <taxon>Bacillota</taxon>
        <taxon>Bacilli</taxon>
        <taxon>Bacillales</taxon>
        <taxon>Listeriaceae</taxon>
        <taxon>Listeria</taxon>
    </lineage>
</organism>
<sequence length="224" mass="24809">MINQKKIAGEKACEWIKDGMVVGLGTGSTVYYTIEKLGEMVNNGLHITGVATSEETSKQAQNLGIPLKSLNDVAEIDITIDGADEIDTDFQGIKGGGGALLREKMVASASLKNIWVVSEEKLVRNLGKFPLPIEVIPFGWKQIERTLEKEHVQTILRRQSSGEIYVTNNGNYILDIVNQTFRDAEMWQEKLAQIPGIVEHGLFLHYVDIIVCAKANGEIELIKK</sequence>
<proteinExistence type="inferred from homology"/>
<gene>
    <name evidence="1" type="primary">rpiA</name>
    <name type="ordered locus">Lm4b_00995</name>
</gene>
<evidence type="ECO:0000255" key="1">
    <source>
        <dbReference type="HAMAP-Rule" id="MF_00170"/>
    </source>
</evidence>
<feature type="chain" id="PRO_1000203682" description="Ribose-5-phosphate isomerase A">
    <location>
        <begin position="1"/>
        <end position="224"/>
    </location>
</feature>
<feature type="active site" description="Proton acceptor" evidence="1">
    <location>
        <position position="103"/>
    </location>
</feature>
<feature type="binding site" evidence="1">
    <location>
        <begin position="26"/>
        <end position="29"/>
    </location>
    <ligand>
        <name>substrate</name>
    </ligand>
</feature>
<feature type="binding site" evidence="1">
    <location>
        <begin position="81"/>
        <end position="84"/>
    </location>
    <ligand>
        <name>substrate</name>
    </ligand>
</feature>
<feature type="binding site" evidence="1">
    <location>
        <begin position="94"/>
        <end position="97"/>
    </location>
    <ligand>
        <name>substrate</name>
    </ligand>
</feature>
<feature type="binding site" evidence="1">
    <location>
        <position position="121"/>
    </location>
    <ligand>
        <name>substrate</name>
    </ligand>
</feature>
<comment type="function">
    <text evidence="1">Catalyzes the reversible conversion of ribose-5-phosphate to ribulose 5-phosphate.</text>
</comment>
<comment type="catalytic activity">
    <reaction evidence="1">
        <text>aldehydo-D-ribose 5-phosphate = D-ribulose 5-phosphate</text>
        <dbReference type="Rhea" id="RHEA:14657"/>
        <dbReference type="ChEBI" id="CHEBI:58121"/>
        <dbReference type="ChEBI" id="CHEBI:58273"/>
        <dbReference type="EC" id="5.3.1.6"/>
    </reaction>
</comment>
<comment type="pathway">
    <text evidence="1">Carbohydrate degradation; pentose phosphate pathway; D-ribose 5-phosphate from D-ribulose 5-phosphate (non-oxidative stage): step 1/1.</text>
</comment>
<comment type="subunit">
    <text evidence="1">Homodimer.</text>
</comment>
<comment type="similarity">
    <text evidence="1">Belongs to the ribose 5-phosphate isomerase family.</text>
</comment>
<accession>C1L1P6</accession>
<reference key="1">
    <citation type="journal article" date="2012" name="BMC Genomics">
        <title>Comparative genomics and transcriptomics of lineages I, II, and III strains of Listeria monocytogenes.</title>
        <authorList>
            <person name="Hain T."/>
            <person name="Ghai R."/>
            <person name="Billion A."/>
            <person name="Kuenne C.T."/>
            <person name="Steinweg C."/>
            <person name="Izar B."/>
            <person name="Mohamed W."/>
            <person name="Mraheil M."/>
            <person name="Domann E."/>
            <person name="Schaffrath S."/>
            <person name="Karst U."/>
            <person name="Goesmann A."/>
            <person name="Oehm S."/>
            <person name="Puhler A."/>
            <person name="Merkl R."/>
            <person name="Vorwerk S."/>
            <person name="Glaser P."/>
            <person name="Garrido P."/>
            <person name="Rusniok C."/>
            <person name="Buchrieser C."/>
            <person name="Goebel W."/>
            <person name="Chakraborty T."/>
        </authorList>
    </citation>
    <scope>NUCLEOTIDE SEQUENCE [LARGE SCALE GENOMIC DNA]</scope>
    <source>
        <strain>CLIP80459</strain>
    </source>
</reference>
<keyword id="KW-0413">Isomerase</keyword>